<gene>
    <name type="primary">RPS19</name>
</gene>
<evidence type="ECO:0000250" key="1">
    <source>
        <dbReference type="UniProtKB" id="P39019"/>
    </source>
</evidence>
<evidence type="ECO:0000250" key="2">
    <source>
        <dbReference type="UniProtKB" id="Q9CZX8"/>
    </source>
</evidence>
<evidence type="ECO:0000305" key="3"/>
<name>RS19_PONAB</name>
<comment type="function">
    <text evidence="1">Component of the small ribosomal subunit. The ribosome is a large ribonucleoprotein complex responsible for the synthesis of proteins in the cell. Required for pre-rRNA processing and maturation of 40S ribosomal subunits. Part of the small subunit (SSU) processome, first precursor of the small eukaryotic ribosomal subunit. During the assembly of the SSU processome in the nucleolus, many ribosome biogenesis factors, an RNA chaperone and ribosomal proteins associate with the nascent pre-rRNA and work in concert to generate RNA folding, modifications, rearrangements and cleavage as well as targeted degradation of pre-ribosomal RNA by the RNA exosome (By similarity).</text>
</comment>
<comment type="subunit">
    <text evidence="1 2">Component of the small ribosomal subunit. Part of the small subunit (SSU) processome, composed of more than 70 proteins and the RNA chaperone small nucleolar RNA (snoRNA) U3. Interacts with RPS19BP1; the interaction is direct and mediates the integration of RPS19 in state post-A1 (By similarity). Interacts with RPS19BP1 (By similarity).</text>
</comment>
<comment type="subcellular location">
    <subcellularLocation>
        <location evidence="1">Cytoplasm</location>
    </subcellularLocation>
    <subcellularLocation>
        <location evidence="1">Nucleus</location>
        <location evidence="1">Nucleolus</location>
    </subcellularLocation>
</comment>
<comment type="similarity">
    <text evidence="3">Belongs to the eukaryotic ribosomal protein eS19 family.</text>
</comment>
<feature type="chain" id="PRO_0000153813" description="Small ribosomal subunit protein eS19">
    <location>
        <begin position="1"/>
        <end position="145"/>
    </location>
</feature>
<feature type="modified residue" description="N6-acetyllysine" evidence="1">
    <location>
        <position position="23"/>
    </location>
</feature>
<feature type="modified residue" description="Omega-N-methylarginine" evidence="1">
    <location>
        <position position="67"/>
    </location>
</feature>
<feature type="modified residue" description="N6-acetyllysine" evidence="1">
    <location>
        <position position="111"/>
    </location>
</feature>
<feature type="modified residue" description="N6-acetyllysine" evidence="2">
    <location>
        <position position="115"/>
    </location>
</feature>
<feature type="modified residue" description="N6-succinyllysine" evidence="2">
    <location>
        <position position="143"/>
    </location>
</feature>
<accession>Q5R8M9</accession>
<proteinExistence type="evidence at transcript level"/>
<sequence length="145" mass="16060">MPGVTVKDVNQQEFVRALAAFLKKSGKLKVPEWVDTVKLAKHKELAPYDENWFYTRAASTARHLYLRGGAGVGSMTKIYGGRQRNGVMPSHFSRGSKSVARRVLQALEGLKMVEKDQDGGRKLTPQGQRDLDRIAGQVAAANKKH</sequence>
<organism>
    <name type="scientific">Pongo abelii</name>
    <name type="common">Sumatran orangutan</name>
    <name type="synonym">Pongo pygmaeus abelii</name>
    <dbReference type="NCBI Taxonomy" id="9601"/>
    <lineage>
        <taxon>Eukaryota</taxon>
        <taxon>Metazoa</taxon>
        <taxon>Chordata</taxon>
        <taxon>Craniata</taxon>
        <taxon>Vertebrata</taxon>
        <taxon>Euteleostomi</taxon>
        <taxon>Mammalia</taxon>
        <taxon>Eutheria</taxon>
        <taxon>Euarchontoglires</taxon>
        <taxon>Primates</taxon>
        <taxon>Haplorrhini</taxon>
        <taxon>Catarrhini</taxon>
        <taxon>Hominidae</taxon>
        <taxon>Pongo</taxon>
    </lineage>
</organism>
<reference key="1">
    <citation type="submission" date="2004-11" db="EMBL/GenBank/DDBJ databases">
        <authorList>
            <consortium name="The German cDNA consortium"/>
        </authorList>
    </citation>
    <scope>NUCLEOTIDE SEQUENCE [LARGE SCALE MRNA]</scope>
    <source>
        <tissue>Heart</tissue>
    </source>
</reference>
<dbReference type="EMBL" id="CR859722">
    <property type="protein sequence ID" value="CAH91881.1"/>
    <property type="molecule type" value="mRNA"/>
</dbReference>
<dbReference type="RefSeq" id="NP_001126089.1">
    <property type="nucleotide sequence ID" value="NM_001132617.1"/>
</dbReference>
<dbReference type="RefSeq" id="XP_009230927.1">
    <property type="nucleotide sequence ID" value="XM_009232652.3"/>
</dbReference>
<dbReference type="RefSeq" id="XP_009230928.1">
    <property type="nucleotide sequence ID" value="XM_009232653.1"/>
</dbReference>
<dbReference type="RefSeq" id="XP_009230929.1">
    <property type="nucleotide sequence ID" value="XM_009232654.1"/>
</dbReference>
<dbReference type="RefSeq" id="XP_024092092.1">
    <property type="nucleotide sequence ID" value="XM_024236324.3"/>
</dbReference>
<dbReference type="SMR" id="Q5R8M9"/>
<dbReference type="FunCoup" id="Q5R8M9">
    <property type="interactions" value="1650"/>
</dbReference>
<dbReference type="STRING" id="9601.ENSPPYP00000011224"/>
<dbReference type="Ensembl" id="ENSPPYT00000011662.3">
    <property type="protein sequence ID" value="ENSPPYP00000011224.2"/>
    <property type="gene ID" value="ENSPPYG00000010029.3"/>
</dbReference>
<dbReference type="GeneID" id="100173042"/>
<dbReference type="KEGG" id="pon:100173042"/>
<dbReference type="CTD" id="6223"/>
<dbReference type="eggNOG" id="KOG3411">
    <property type="taxonomic scope" value="Eukaryota"/>
</dbReference>
<dbReference type="GeneTree" id="ENSGT00390000013102"/>
<dbReference type="HOGENOM" id="CLU_108559_0_1_1"/>
<dbReference type="InParanoid" id="Q5R8M9"/>
<dbReference type="OrthoDB" id="428974at2759"/>
<dbReference type="TreeFam" id="TF315008"/>
<dbReference type="Proteomes" id="UP000001595">
    <property type="component" value="Chromosome 19"/>
</dbReference>
<dbReference type="GO" id="GO:0022627">
    <property type="term" value="C:cytosolic small ribosomal subunit"/>
    <property type="evidence" value="ECO:0007669"/>
    <property type="project" value="TreeGrafter"/>
</dbReference>
<dbReference type="GO" id="GO:0005730">
    <property type="term" value="C:nucleolus"/>
    <property type="evidence" value="ECO:0007669"/>
    <property type="project" value="UniProtKB-SubCell"/>
</dbReference>
<dbReference type="GO" id="GO:0032040">
    <property type="term" value="C:small-subunit processome"/>
    <property type="evidence" value="ECO:0000250"/>
    <property type="project" value="UniProtKB"/>
</dbReference>
<dbReference type="GO" id="GO:0003723">
    <property type="term" value="F:RNA binding"/>
    <property type="evidence" value="ECO:0007669"/>
    <property type="project" value="TreeGrafter"/>
</dbReference>
<dbReference type="GO" id="GO:0003735">
    <property type="term" value="F:structural constituent of ribosome"/>
    <property type="evidence" value="ECO:0007669"/>
    <property type="project" value="InterPro"/>
</dbReference>
<dbReference type="GO" id="GO:0000028">
    <property type="term" value="P:ribosomal small subunit assembly"/>
    <property type="evidence" value="ECO:0007669"/>
    <property type="project" value="TreeGrafter"/>
</dbReference>
<dbReference type="GO" id="GO:0042274">
    <property type="term" value="P:ribosomal small subunit biogenesis"/>
    <property type="evidence" value="ECO:0000250"/>
    <property type="project" value="UniProtKB"/>
</dbReference>
<dbReference type="GO" id="GO:0006412">
    <property type="term" value="P:translation"/>
    <property type="evidence" value="ECO:0007669"/>
    <property type="project" value="InterPro"/>
</dbReference>
<dbReference type="FunFam" id="1.10.10.10:FF:000255">
    <property type="entry name" value="40S ribosomal protein S19"/>
    <property type="match status" value="1"/>
</dbReference>
<dbReference type="Gene3D" id="1.10.10.10">
    <property type="entry name" value="Winged helix-like DNA-binding domain superfamily/Winged helix DNA-binding domain"/>
    <property type="match status" value="1"/>
</dbReference>
<dbReference type="InterPro" id="IPR001266">
    <property type="entry name" value="Ribosomal_eS19"/>
</dbReference>
<dbReference type="InterPro" id="IPR018277">
    <property type="entry name" value="Ribosomal_eS19_CS"/>
</dbReference>
<dbReference type="InterPro" id="IPR036388">
    <property type="entry name" value="WH-like_DNA-bd_sf"/>
</dbReference>
<dbReference type="InterPro" id="IPR036390">
    <property type="entry name" value="WH_DNA-bd_sf"/>
</dbReference>
<dbReference type="PANTHER" id="PTHR11710">
    <property type="entry name" value="40S RIBOSOMAL PROTEIN S19"/>
    <property type="match status" value="1"/>
</dbReference>
<dbReference type="PANTHER" id="PTHR11710:SF0">
    <property type="entry name" value="40S RIBOSOMAL PROTEIN S19"/>
    <property type="match status" value="1"/>
</dbReference>
<dbReference type="Pfam" id="PF01090">
    <property type="entry name" value="Ribosomal_S19e"/>
    <property type="match status" value="1"/>
</dbReference>
<dbReference type="SMART" id="SM01413">
    <property type="entry name" value="Ribosomal_S19e"/>
    <property type="match status" value="1"/>
</dbReference>
<dbReference type="SUPFAM" id="SSF46785">
    <property type="entry name" value="Winged helix' DNA-binding domain"/>
    <property type="match status" value="1"/>
</dbReference>
<dbReference type="PROSITE" id="PS00628">
    <property type="entry name" value="RIBOSOMAL_S19E"/>
    <property type="match status" value="1"/>
</dbReference>
<protein>
    <recommendedName>
        <fullName evidence="3">Small ribosomal subunit protein eS19</fullName>
    </recommendedName>
    <alternativeName>
        <fullName>40S ribosomal protein S19</fullName>
    </alternativeName>
</protein>
<keyword id="KW-0007">Acetylation</keyword>
<keyword id="KW-0963">Cytoplasm</keyword>
<keyword id="KW-0488">Methylation</keyword>
<keyword id="KW-0539">Nucleus</keyword>
<keyword id="KW-1185">Reference proteome</keyword>
<keyword id="KW-0687">Ribonucleoprotein</keyword>
<keyword id="KW-0689">Ribosomal protein</keyword>